<gene>
    <name evidence="1" type="primary">hisF</name>
    <name type="ordered locus">VC0395_A0708</name>
    <name type="ordered locus">VC395_1205</name>
</gene>
<keyword id="KW-0028">Amino-acid biosynthesis</keyword>
<keyword id="KW-0963">Cytoplasm</keyword>
<keyword id="KW-0368">Histidine biosynthesis</keyword>
<keyword id="KW-0456">Lyase</keyword>
<proteinExistence type="inferred from homology"/>
<feature type="chain" id="PRO_1000072929" description="Imidazole glycerol phosphate synthase subunit HisF">
    <location>
        <begin position="1"/>
        <end position="257"/>
    </location>
</feature>
<feature type="active site" evidence="1">
    <location>
        <position position="11"/>
    </location>
</feature>
<feature type="active site" evidence="1">
    <location>
        <position position="130"/>
    </location>
</feature>
<protein>
    <recommendedName>
        <fullName evidence="1">Imidazole glycerol phosphate synthase subunit HisF</fullName>
        <ecNumber evidence="1">4.3.2.10</ecNumber>
    </recommendedName>
    <alternativeName>
        <fullName evidence="1">IGP synthase cyclase subunit</fullName>
    </alternativeName>
    <alternativeName>
        <fullName evidence="1">IGP synthase subunit HisF</fullName>
    </alternativeName>
    <alternativeName>
        <fullName evidence="1">ImGP synthase subunit HisF</fullName>
        <shortName evidence="1">IGPS subunit HisF</shortName>
    </alternativeName>
</protein>
<sequence>MLAKRIIPCLDVRDGQVVKGVQFRNHEIIGDIVPLAKRYAEEGADELVFYDITASSDGRVVDKSWVARVAEVIDIPFCVAGGIKSAQDAARILEFGADKVSINSPALANPQLITDLADRFGVQCIVVGIDSYFDKETGQYQVYQFTGDESRTRATQWQTCDWVQEVQKRGAGEIVLNMMNQDGVRNGYDLEQLNLVRSVCRVPLIASGGAGAMEHFAQAFTQANVDGALAASVFHKQIINIGELKQYLKQQGIEVRR</sequence>
<evidence type="ECO:0000255" key="1">
    <source>
        <dbReference type="HAMAP-Rule" id="MF_01013"/>
    </source>
</evidence>
<dbReference type="EC" id="4.3.2.10" evidence="1"/>
<dbReference type="EMBL" id="CP000627">
    <property type="protein sequence ID" value="ABQ21126.1"/>
    <property type="molecule type" value="Genomic_DNA"/>
</dbReference>
<dbReference type="EMBL" id="CP001235">
    <property type="protein sequence ID" value="ACP09215.1"/>
    <property type="molecule type" value="Genomic_DNA"/>
</dbReference>
<dbReference type="RefSeq" id="WP_000880146.1">
    <property type="nucleotide sequence ID" value="NZ_JAACZH010000034.1"/>
</dbReference>
<dbReference type="SMR" id="A5F289"/>
<dbReference type="GeneID" id="94014095"/>
<dbReference type="KEGG" id="vco:VC0395_A0708"/>
<dbReference type="KEGG" id="vcr:VC395_1205"/>
<dbReference type="PATRIC" id="fig|345073.21.peg.1172"/>
<dbReference type="eggNOG" id="COG0107">
    <property type="taxonomic scope" value="Bacteria"/>
</dbReference>
<dbReference type="HOGENOM" id="CLU_048577_4_0_6"/>
<dbReference type="OrthoDB" id="9781903at2"/>
<dbReference type="UniPathway" id="UPA00031">
    <property type="reaction ID" value="UER00010"/>
</dbReference>
<dbReference type="Proteomes" id="UP000000249">
    <property type="component" value="Chromosome 2"/>
</dbReference>
<dbReference type="GO" id="GO:0005737">
    <property type="term" value="C:cytoplasm"/>
    <property type="evidence" value="ECO:0007669"/>
    <property type="project" value="UniProtKB-SubCell"/>
</dbReference>
<dbReference type="GO" id="GO:0000107">
    <property type="term" value="F:imidazoleglycerol-phosphate synthase activity"/>
    <property type="evidence" value="ECO:0007669"/>
    <property type="project" value="UniProtKB-UniRule"/>
</dbReference>
<dbReference type="GO" id="GO:0016829">
    <property type="term" value="F:lyase activity"/>
    <property type="evidence" value="ECO:0007669"/>
    <property type="project" value="UniProtKB-KW"/>
</dbReference>
<dbReference type="GO" id="GO:0000105">
    <property type="term" value="P:L-histidine biosynthetic process"/>
    <property type="evidence" value="ECO:0007669"/>
    <property type="project" value="UniProtKB-UniRule"/>
</dbReference>
<dbReference type="CDD" id="cd04731">
    <property type="entry name" value="HisF"/>
    <property type="match status" value="1"/>
</dbReference>
<dbReference type="FunFam" id="3.20.20.70:FF:000006">
    <property type="entry name" value="Imidazole glycerol phosphate synthase subunit HisF"/>
    <property type="match status" value="1"/>
</dbReference>
<dbReference type="Gene3D" id="3.20.20.70">
    <property type="entry name" value="Aldolase class I"/>
    <property type="match status" value="1"/>
</dbReference>
<dbReference type="HAMAP" id="MF_01013">
    <property type="entry name" value="HisF"/>
    <property type="match status" value="1"/>
</dbReference>
<dbReference type="InterPro" id="IPR013785">
    <property type="entry name" value="Aldolase_TIM"/>
</dbReference>
<dbReference type="InterPro" id="IPR006062">
    <property type="entry name" value="His_biosynth"/>
</dbReference>
<dbReference type="InterPro" id="IPR004651">
    <property type="entry name" value="HisF"/>
</dbReference>
<dbReference type="InterPro" id="IPR050064">
    <property type="entry name" value="IGPS_HisA/HisF"/>
</dbReference>
<dbReference type="InterPro" id="IPR011060">
    <property type="entry name" value="RibuloseP-bd_barrel"/>
</dbReference>
<dbReference type="NCBIfam" id="TIGR00735">
    <property type="entry name" value="hisF"/>
    <property type="match status" value="1"/>
</dbReference>
<dbReference type="PANTHER" id="PTHR21235:SF2">
    <property type="entry name" value="IMIDAZOLE GLYCEROL PHOSPHATE SYNTHASE HISHF"/>
    <property type="match status" value="1"/>
</dbReference>
<dbReference type="PANTHER" id="PTHR21235">
    <property type="entry name" value="IMIDAZOLE GLYCEROL PHOSPHATE SYNTHASE SUBUNIT HISF/H IGP SYNTHASE SUBUNIT HISF/H"/>
    <property type="match status" value="1"/>
</dbReference>
<dbReference type="Pfam" id="PF00977">
    <property type="entry name" value="His_biosynth"/>
    <property type="match status" value="1"/>
</dbReference>
<dbReference type="SUPFAM" id="SSF51366">
    <property type="entry name" value="Ribulose-phoshate binding barrel"/>
    <property type="match status" value="1"/>
</dbReference>
<organism>
    <name type="scientific">Vibrio cholerae serotype O1 (strain ATCC 39541 / Classical Ogawa 395 / O395)</name>
    <dbReference type="NCBI Taxonomy" id="345073"/>
    <lineage>
        <taxon>Bacteria</taxon>
        <taxon>Pseudomonadati</taxon>
        <taxon>Pseudomonadota</taxon>
        <taxon>Gammaproteobacteria</taxon>
        <taxon>Vibrionales</taxon>
        <taxon>Vibrionaceae</taxon>
        <taxon>Vibrio</taxon>
    </lineage>
</organism>
<reference key="1">
    <citation type="submission" date="2007-03" db="EMBL/GenBank/DDBJ databases">
        <authorList>
            <person name="Heidelberg J."/>
        </authorList>
    </citation>
    <scope>NUCLEOTIDE SEQUENCE [LARGE SCALE GENOMIC DNA]</scope>
    <source>
        <strain>ATCC 39541 / Classical Ogawa 395 / O395</strain>
    </source>
</reference>
<reference key="2">
    <citation type="journal article" date="2008" name="PLoS ONE">
        <title>A recalibrated molecular clock and independent origins for the cholera pandemic clones.</title>
        <authorList>
            <person name="Feng L."/>
            <person name="Reeves P.R."/>
            <person name="Lan R."/>
            <person name="Ren Y."/>
            <person name="Gao C."/>
            <person name="Zhou Z."/>
            <person name="Ren Y."/>
            <person name="Cheng J."/>
            <person name="Wang W."/>
            <person name="Wang J."/>
            <person name="Qian W."/>
            <person name="Li D."/>
            <person name="Wang L."/>
        </authorList>
    </citation>
    <scope>NUCLEOTIDE SEQUENCE [LARGE SCALE GENOMIC DNA]</scope>
    <source>
        <strain>ATCC 39541 / Classical Ogawa 395 / O395</strain>
    </source>
</reference>
<accession>A5F289</accession>
<accession>C3LZJ9</accession>
<comment type="function">
    <text evidence="1">IGPS catalyzes the conversion of PRFAR and glutamine to IGP, AICAR and glutamate. The HisF subunit catalyzes the cyclization activity that produces IGP and AICAR from PRFAR using the ammonia provided by the HisH subunit.</text>
</comment>
<comment type="catalytic activity">
    <reaction evidence="1">
        <text>5-[(5-phospho-1-deoxy-D-ribulos-1-ylimino)methylamino]-1-(5-phospho-beta-D-ribosyl)imidazole-4-carboxamide + L-glutamine = D-erythro-1-(imidazol-4-yl)glycerol 3-phosphate + 5-amino-1-(5-phospho-beta-D-ribosyl)imidazole-4-carboxamide + L-glutamate + H(+)</text>
        <dbReference type="Rhea" id="RHEA:24793"/>
        <dbReference type="ChEBI" id="CHEBI:15378"/>
        <dbReference type="ChEBI" id="CHEBI:29985"/>
        <dbReference type="ChEBI" id="CHEBI:58278"/>
        <dbReference type="ChEBI" id="CHEBI:58359"/>
        <dbReference type="ChEBI" id="CHEBI:58475"/>
        <dbReference type="ChEBI" id="CHEBI:58525"/>
        <dbReference type="EC" id="4.3.2.10"/>
    </reaction>
</comment>
<comment type="pathway">
    <text evidence="1">Amino-acid biosynthesis; L-histidine biosynthesis; L-histidine from 5-phospho-alpha-D-ribose 1-diphosphate: step 5/9.</text>
</comment>
<comment type="subunit">
    <text evidence="1">Heterodimer of HisH and HisF.</text>
</comment>
<comment type="subcellular location">
    <subcellularLocation>
        <location evidence="1">Cytoplasm</location>
    </subcellularLocation>
</comment>
<comment type="similarity">
    <text evidence="1">Belongs to the HisA/HisF family.</text>
</comment>
<name>HIS6_VIBC3</name>